<reference key="1">
    <citation type="journal article" date="2009" name="Appl. Environ. Microbiol.">
        <title>Three genomes from the phylum Acidobacteria provide insight into the lifestyles of these microorganisms in soils.</title>
        <authorList>
            <person name="Ward N.L."/>
            <person name="Challacombe J.F."/>
            <person name="Janssen P.H."/>
            <person name="Henrissat B."/>
            <person name="Coutinho P.M."/>
            <person name="Wu M."/>
            <person name="Xie G."/>
            <person name="Haft D.H."/>
            <person name="Sait M."/>
            <person name="Badger J."/>
            <person name="Barabote R.D."/>
            <person name="Bradley B."/>
            <person name="Brettin T.S."/>
            <person name="Brinkac L.M."/>
            <person name="Bruce D."/>
            <person name="Creasy T."/>
            <person name="Daugherty S.C."/>
            <person name="Davidsen T.M."/>
            <person name="DeBoy R.T."/>
            <person name="Detter J.C."/>
            <person name="Dodson R.J."/>
            <person name="Durkin A.S."/>
            <person name="Ganapathy A."/>
            <person name="Gwinn-Giglio M."/>
            <person name="Han C.S."/>
            <person name="Khouri H."/>
            <person name="Kiss H."/>
            <person name="Kothari S.P."/>
            <person name="Madupu R."/>
            <person name="Nelson K.E."/>
            <person name="Nelson W.C."/>
            <person name="Paulsen I."/>
            <person name="Penn K."/>
            <person name="Ren Q."/>
            <person name="Rosovitz M.J."/>
            <person name="Selengut J.D."/>
            <person name="Shrivastava S."/>
            <person name="Sullivan S.A."/>
            <person name="Tapia R."/>
            <person name="Thompson L.S."/>
            <person name="Watkins K.L."/>
            <person name="Yang Q."/>
            <person name="Yu C."/>
            <person name="Zafar N."/>
            <person name="Zhou L."/>
            <person name="Kuske C.R."/>
        </authorList>
    </citation>
    <scope>NUCLEOTIDE SEQUENCE [LARGE SCALE GENOMIC DNA]</scope>
    <source>
        <strain>Ellin6076</strain>
    </source>
</reference>
<evidence type="ECO:0000250" key="1"/>
<evidence type="ECO:0000255" key="2">
    <source>
        <dbReference type="HAMAP-Rule" id="MF_00118"/>
    </source>
</evidence>
<dbReference type="EC" id="3.6.5.3" evidence="2"/>
<dbReference type="EMBL" id="CP000473">
    <property type="protein sequence ID" value="ABJ86075.1"/>
    <property type="molecule type" value="Genomic_DNA"/>
</dbReference>
<dbReference type="EMBL" id="CP000473">
    <property type="protein sequence ID" value="ABJ87248.1"/>
    <property type="molecule type" value="Genomic_DNA"/>
</dbReference>
<dbReference type="SMR" id="Q01SX2"/>
<dbReference type="FunCoup" id="Q01SX2">
    <property type="interactions" value="709"/>
</dbReference>
<dbReference type="STRING" id="234267.Acid_5120"/>
<dbReference type="KEGG" id="sus:Acid_5120"/>
<dbReference type="KEGG" id="sus:Acid_6322"/>
<dbReference type="eggNOG" id="COG0050">
    <property type="taxonomic scope" value="Bacteria"/>
</dbReference>
<dbReference type="HOGENOM" id="CLU_007265_0_1_0"/>
<dbReference type="InParanoid" id="Q01SX2"/>
<dbReference type="OrthoDB" id="9804504at2"/>
<dbReference type="GO" id="GO:0005737">
    <property type="term" value="C:cytoplasm"/>
    <property type="evidence" value="ECO:0007669"/>
    <property type="project" value="UniProtKB-SubCell"/>
</dbReference>
<dbReference type="GO" id="GO:0005525">
    <property type="term" value="F:GTP binding"/>
    <property type="evidence" value="ECO:0007669"/>
    <property type="project" value="UniProtKB-UniRule"/>
</dbReference>
<dbReference type="GO" id="GO:0003924">
    <property type="term" value="F:GTPase activity"/>
    <property type="evidence" value="ECO:0007669"/>
    <property type="project" value="InterPro"/>
</dbReference>
<dbReference type="GO" id="GO:0003746">
    <property type="term" value="F:translation elongation factor activity"/>
    <property type="evidence" value="ECO:0007669"/>
    <property type="project" value="UniProtKB-UniRule"/>
</dbReference>
<dbReference type="CDD" id="cd01884">
    <property type="entry name" value="EF_Tu"/>
    <property type="match status" value="1"/>
</dbReference>
<dbReference type="CDD" id="cd03697">
    <property type="entry name" value="EFTU_II"/>
    <property type="match status" value="1"/>
</dbReference>
<dbReference type="CDD" id="cd03707">
    <property type="entry name" value="EFTU_III"/>
    <property type="match status" value="1"/>
</dbReference>
<dbReference type="FunFam" id="2.40.30.10:FF:000001">
    <property type="entry name" value="Elongation factor Tu"/>
    <property type="match status" value="1"/>
</dbReference>
<dbReference type="FunFam" id="3.40.50.300:FF:000003">
    <property type="entry name" value="Elongation factor Tu"/>
    <property type="match status" value="1"/>
</dbReference>
<dbReference type="Gene3D" id="3.40.50.300">
    <property type="entry name" value="P-loop containing nucleotide triphosphate hydrolases"/>
    <property type="match status" value="1"/>
</dbReference>
<dbReference type="Gene3D" id="2.40.30.10">
    <property type="entry name" value="Translation factors"/>
    <property type="match status" value="2"/>
</dbReference>
<dbReference type="HAMAP" id="MF_00118_B">
    <property type="entry name" value="EF_Tu_B"/>
    <property type="match status" value="1"/>
</dbReference>
<dbReference type="InterPro" id="IPR041709">
    <property type="entry name" value="EF-Tu_GTP-bd"/>
</dbReference>
<dbReference type="InterPro" id="IPR050055">
    <property type="entry name" value="EF-Tu_GTPase"/>
</dbReference>
<dbReference type="InterPro" id="IPR004161">
    <property type="entry name" value="EFTu-like_2"/>
</dbReference>
<dbReference type="InterPro" id="IPR033720">
    <property type="entry name" value="EFTU_2"/>
</dbReference>
<dbReference type="InterPro" id="IPR031157">
    <property type="entry name" value="G_TR_CS"/>
</dbReference>
<dbReference type="InterPro" id="IPR027417">
    <property type="entry name" value="P-loop_NTPase"/>
</dbReference>
<dbReference type="InterPro" id="IPR005225">
    <property type="entry name" value="Small_GTP-bd"/>
</dbReference>
<dbReference type="InterPro" id="IPR000795">
    <property type="entry name" value="T_Tr_GTP-bd_dom"/>
</dbReference>
<dbReference type="InterPro" id="IPR009000">
    <property type="entry name" value="Transl_B-barrel_sf"/>
</dbReference>
<dbReference type="InterPro" id="IPR009001">
    <property type="entry name" value="Transl_elong_EF1A/Init_IF2_C"/>
</dbReference>
<dbReference type="InterPro" id="IPR004541">
    <property type="entry name" value="Transl_elong_EFTu/EF1A_bac/org"/>
</dbReference>
<dbReference type="InterPro" id="IPR004160">
    <property type="entry name" value="Transl_elong_EFTu/EF1A_C"/>
</dbReference>
<dbReference type="NCBIfam" id="TIGR00485">
    <property type="entry name" value="EF-Tu"/>
    <property type="match status" value="1"/>
</dbReference>
<dbReference type="NCBIfam" id="NF000766">
    <property type="entry name" value="PRK00049.1"/>
    <property type="match status" value="1"/>
</dbReference>
<dbReference type="NCBIfam" id="NF009372">
    <property type="entry name" value="PRK12735.1"/>
    <property type="match status" value="1"/>
</dbReference>
<dbReference type="NCBIfam" id="NF009373">
    <property type="entry name" value="PRK12736.1"/>
    <property type="match status" value="1"/>
</dbReference>
<dbReference type="NCBIfam" id="TIGR00231">
    <property type="entry name" value="small_GTP"/>
    <property type="match status" value="1"/>
</dbReference>
<dbReference type="PANTHER" id="PTHR43721:SF22">
    <property type="entry name" value="ELONGATION FACTOR TU, MITOCHONDRIAL"/>
    <property type="match status" value="1"/>
</dbReference>
<dbReference type="PANTHER" id="PTHR43721">
    <property type="entry name" value="ELONGATION FACTOR TU-RELATED"/>
    <property type="match status" value="1"/>
</dbReference>
<dbReference type="Pfam" id="PF00009">
    <property type="entry name" value="GTP_EFTU"/>
    <property type="match status" value="1"/>
</dbReference>
<dbReference type="Pfam" id="PF03144">
    <property type="entry name" value="GTP_EFTU_D2"/>
    <property type="match status" value="1"/>
</dbReference>
<dbReference type="Pfam" id="PF03143">
    <property type="entry name" value="GTP_EFTU_D3"/>
    <property type="match status" value="1"/>
</dbReference>
<dbReference type="PRINTS" id="PR00315">
    <property type="entry name" value="ELONGATNFCT"/>
</dbReference>
<dbReference type="SUPFAM" id="SSF50465">
    <property type="entry name" value="EF-Tu/eEF-1alpha/eIF2-gamma C-terminal domain"/>
    <property type="match status" value="1"/>
</dbReference>
<dbReference type="SUPFAM" id="SSF52540">
    <property type="entry name" value="P-loop containing nucleoside triphosphate hydrolases"/>
    <property type="match status" value="1"/>
</dbReference>
<dbReference type="SUPFAM" id="SSF50447">
    <property type="entry name" value="Translation proteins"/>
    <property type="match status" value="1"/>
</dbReference>
<dbReference type="PROSITE" id="PS00301">
    <property type="entry name" value="G_TR_1"/>
    <property type="match status" value="1"/>
</dbReference>
<dbReference type="PROSITE" id="PS51722">
    <property type="entry name" value="G_TR_2"/>
    <property type="match status" value="1"/>
</dbReference>
<accession>Q01SX2</accession>
<proteinExistence type="inferred from homology"/>
<protein>
    <recommendedName>
        <fullName evidence="2">Elongation factor Tu</fullName>
        <shortName evidence="2">EF-Tu</shortName>
        <ecNumber evidence="2">3.6.5.3</ecNumber>
    </recommendedName>
</protein>
<name>EFTU_SOLUE</name>
<organism>
    <name type="scientific">Solibacter usitatus (strain Ellin6076)</name>
    <dbReference type="NCBI Taxonomy" id="234267"/>
    <lineage>
        <taxon>Bacteria</taxon>
        <taxon>Pseudomonadati</taxon>
        <taxon>Acidobacteriota</taxon>
        <taxon>Terriglobia</taxon>
        <taxon>Bryobacterales</taxon>
        <taxon>Solibacteraceae</taxon>
        <taxon>Candidatus Solibacter</taxon>
    </lineage>
</organism>
<keyword id="KW-0963">Cytoplasm</keyword>
<keyword id="KW-0251">Elongation factor</keyword>
<keyword id="KW-0342">GTP-binding</keyword>
<keyword id="KW-0378">Hydrolase</keyword>
<keyword id="KW-0460">Magnesium</keyword>
<keyword id="KW-0479">Metal-binding</keyword>
<keyword id="KW-0547">Nucleotide-binding</keyword>
<keyword id="KW-0648">Protein biosynthesis</keyword>
<gene>
    <name evidence="2" type="primary">tuf1</name>
    <name type="ordered locus">Acid_5120</name>
</gene>
<gene>
    <name evidence="2" type="primary">tuf2</name>
    <name type="ordered locus">Acid_6322</name>
</gene>
<comment type="function">
    <text evidence="2">GTP hydrolase that promotes the GTP-dependent binding of aminoacyl-tRNA to the A-site of ribosomes during protein biosynthesis.</text>
</comment>
<comment type="catalytic activity">
    <reaction evidence="2">
        <text>GTP + H2O = GDP + phosphate + H(+)</text>
        <dbReference type="Rhea" id="RHEA:19669"/>
        <dbReference type="ChEBI" id="CHEBI:15377"/>
        <dbReference type="ChEBI" id="CHEBI:15378"/>
        <dbReference type="ChEBI" id="CHEBI:37565"/>
        <dbReference type="ChEBI" id="CHEBI:43474"/>
        <dbReference type="ChEBI" id="CHEBI:58189"/>
        <dbReference type="EC" id="3.6.5.3"/>
    </reaction>
    <physiologicalReaction direction="left-to-right" evidence="2">
        <dbReference type="Rhea" id="RHEA:19670"/>
    </physiologicalReaction>
</comment>
<comment type="subunit">
    <text evidence="2">Monomer.</text>
</comment>
<comment type="subcellular location">
    <subcellularLocation>
        <location evidence="2">Cytoplasm</location>
    </subcellularLocation>
</comment>
<comment type="similarity">
    <text evidence="2">Belongs to the TRAFAC class translation factor GTPase superfamily. Classic translation factor GTPase family. EF-Tu/EF-1A subfamily.</text>
</comment>
<feature type="chain" id="PRO_0000337548" description="Elongation factor Tu">
    <location>
        <begin position="1"/>
        <end position="395"/>
    </location>
</feature>
<feature type="domain" description="tr-type G">
    <location>
        <begin position="10"/>
        <end position="205"/>
    </location>
</feature>
<feature type="region of interest" description="G1" evidence="1">
    <location>
        <begin position="19"/>
        <end position="26"/>
    </location>
</feature>
<feature type="region of interest" description="G2" evidence="1">
    <location>
        <begin position="61"/>
        <end position="65"/>
    </location>
</feature>
<feature type="region of interest" description="G3" evidence="1">
    <location>
        <begin position="82"/>
        <end position="85"/>
    </location>
</feature>
<feature type="region of interest" description="G4" evidence="1">
    <location>
        <begin position="137"/>
        <end position="140"/>
    </location>
</feature>
<feature type="region of interest" description="G5" evidence="1">
    <location>
        <begin position="175"/>
        <end position="177"/>
    </location>
</feature>
<feature type="binding site" evidence="2">
    <location>
        <begin position="19"/>
        <end position="26"/>
    </location>
    <ligand>
        <name>GTP</name>
        <dbReference type="ChEBI" id="CHEBI:37565"/>
    </ligand>
</feature>
<feature type="binding site" evidence="2">
    <location>
        <position position="26"/>
    </location>
    <ligand>
        <name>Mg(2+)</name>
        <dbReference type="ChEBI" id="CHEBI:18420"/>
    </ligand>
</feature>
<feature type="binding site" evidence="2">
    <location>
        <begin position="82"/>
        <end position="86"/>
    </location>
    <ligand>
        <name>GTP</name>
        <dbReference type="ChEBI" id="CHEBI:37565"/>
    </ligand>
</feature>
<feature type="binding site" evidence="2">
    <location>
        <begin position="137"/>
        <end position="140"/>
    </location>
    <ligand>
        <name>GTP</name>
        <dbReference type="ChEBI" id="CHEBI:37565"/>
    </ligand>
</feature>
<sequence length="395" mass="43550">MAKEKFDRSKPHVNIGTIGHIDHGKTTLTAAITKVLAKHNPKNKFRSFDSIDNAPEEKARGITIAVAHVEYETAKRHYAHVDCPGHADYIKNMITGAAQMDGAIVVVAATDGPMPQTREHILLARQVGVPYIVVAMNKVDMVDDSELLDLVELEVRELLKSYQFPGDDLPVVRVSALGALNGEPQWEKTVDELMEAVDSYIPMPERAIDKPFIMPIEDIFSIQGRGTVVTGRIERGICKVGEEMEIVGFRDTRKTVVTGVEMFKKLLDEGRAGDNVGLLLRGVEKDMVERGQVIAKPGSITPHTKFKGEVYVLSKEEGGRHTPFFKGYRPQFYFRTTDVTGVAQLPEGTEMVMPGDNVSLEVELITPVAMDKGLRFAIREGGRTVGAGTVTEILK</sequence>